<evidence type="ECO:0000305" key="1"/>
<accession>P50356</accession>
<dbReference type="EC" id="2.4.1.-"/>
<dbReference type="EMBL" id="X87578">
    <property type="protein sequence ID" value="CAA60879.1"/>
    <property type="molecule type" value="Genomic_DNA"/>
</dbReference>
<dbReference type="SMR" id="P50356"/>
<dbReference type="CAZy" id="GT2">
    <property type="family name" value="Glycosyltransferase Family 2"/>
</dbReference>
<dbReference type="GO" id="GO:0005886">
    <property type="term" value="C:plasma membrane"/>
    <property type="evidence" value="ECO:0007669"/>
    <property type="project" value="UniProtKB-SubCell"/>
</dbReference>
<dbReference type="GO" id="GO:0050501">
    <property type="term" value="F:hyaluronan synthase activity"/>
    <property type="evidence" value="ECO:0007669"/>
    <property type="project" value="TreeGrafter"/>
</dbReference>
<dbReference type="GO" id="GO:0085029">
    <property type="term" value="P:extracellular matrix assembly"/>
    <property type="evidence" value="ECO:0007669"/>
    <property type="project" value="TreeGrafter"/>
</dbReference>
<dbReference type="GO" id="GO:0030213">
    <property type="term" value="P:hyaluronan biosynthetic process"/>
    <property type="evidence" value="ECO:0007669"/>
    <property type="project" value="TreeGrafter"/>
</dbReference>
<dbReference type="CDD" id="cd06423">
    <property type="entry name" value="CESA_like"/>
    <property type="match status" value="1"/>
</dbReference>
<dbReference type="Gene3D" id="3.90.550.10">
    <property type="entry name" value="Spore Coat Polysaccharide Biosynthesis Protein SpsA, Chain A"/>
    <property type="match status" value="1"/>
</dbReference>
<dbReference type="InterPro" id="IPR026463">
    <property type="entry name" value="Chitooligosach_Synthase_NodC"/>
</dbReference>
<dbReference type="InterPro" id="IPR001173">
    <property type="entry name" value="Glyco_trans_2-like"/>
</dbReference>
<dbReference type="InterPro" id="IPR029044">
    <property type="entry name" value="Nucleotide-diphossugar_trans"/>
</dbReference>
<dbReference type="NCBIfam" id="TIGR04242">
    <property type="entry name" value="nodulat_NodC"/>
    <property type="match status" value="1"/>
</dbReference>
<dbReference type="PANTHER" id="PTHR22913">
    <property type="entry name" value="HYALURONAN SYNTHASE"/>
    <property type="match status" value="1"/>
</dbReference>
<dbReference type="PANTHER" id="PTHR22913:SF12">
    <property type="entry name" value="MANNURONAN SYNTHASE"/>
    <property type="match status" value="1"/>
</dbReference>
<dbReference type="Pfam" id="PF00535">
    <property type="entry name" value="Glycos_transf_2"/>
    <property type="match status" value="1"/>
</dbReference>
<dbReference type="SUPFAM" id="SSF53448">
    <property type="entry name" value="Nucleotide-diphospho-sugar transferases"/>
    <property type="match status" value="1"/>
</dbReference>
<protein>
    <recommendedName>
        <fullName>N-acetylglucosaminyltransferase</fullName>
        <ecNumber>2.4.1.-</ecNumber>
    </recommendedName>
    <alternativeName>
        <fullName>Nodulation protein C</fullName>
    </alternativeName>
</protein>
<reference key="1">
    <citation type="journal article" date="1999" name="FEMS Microbiol. Lett.">
        <title>Identification of nodulation promoter (nod-box) regions of Rhizobium galegae.</title>
        <authorList>
            <person name="Suominen L."/>
            <person name="Paulin L."/>
            <person name="Saano A."/>
            <person name="Saren A.-M."/>
            <person name="Tas E."/>
            <person name="Lindstroem K."/>
        </authorList>
    </citation>
    <scope>NUCLEOTIDE SEQUENCE [GENOMIC DNA]</scope>
    <source>
        <strain>HAMBI 1174</strain>
    </source>
</reference>
<organism>
    <name type="scientific">Neorhizobium galegae</name>
    <name type="common">Rhizobium galegae</name>
    <dbReference type="NCBI Taxonomy" id="399"/>
    <lineage>
        <taxon>Bacteria</taxon>
        <taxon>Pseudomonadati</taxon>
        <taxon>Pseudomonadota</taxon>
        <taxon>Alphaproteobacteria</taxon>
        <taxon>Hyphomicrobiales</taxon>
        <taxon>Rhizobiaceae</taxon>
        <taxon>Rhizobium/Agrobacterium group</taxon>
        <taxon>Neorhizobium</taxon>
    </lineage>
</organism>
<proteinExistence type="inferred from homology"/>
<name>NODC_NEOGA</name>
<sequence>MTLLETIGIAAVTLHALLSAIYKSMQAFYARKASGSQPRSKDIDPAALPSVDIIVPCFNEDPAILSACLSSLAGQDYGGKLRIYMVDDGSCNREAILPVHDFYTSDPRFEFLLLSKNVGKRKAQIAAIERSCGDLILNVDSDTSIASDVVTLLVEKMRDSDVGAAMGQLKASNRDKNLLTRLIDMEYWLACNDERAAQARFGAVMCCCGPCAMYRRSALLLLLDQYQTQLYRGKPSDFGEDRHLTILMLSAGFRTEYVPEAIAKTVVPDRMGSYLRQQLRWARSTFRDTLLALPLLPSHNRFLTLDAIHQNIGPLLLAVSSATGITQFILTATVPGWTIIIIASMTMVRCSVAAYRSRQIRFLAFSLHTLINLFMLIPLKGFALLTLSNSDWLSRGSTTDGPAIAESNAASNEAEIVASASPFGGGTSWRFRR</sequence>
<gene>
    <name type="primary">nodC</name>
</gene>
<comment type="function">
    <text>Involved in the synthesis of Nod factor, a sulfated N-acyl-beta-1,4-tetrasaccharide of N-acetylglucosamine which initiates a series of events in the host plant species leading eventually to nodulation.</text>
</comment>
<comment type="subcellular location">
    <subcellularLocation>
        <location evidence="1">Cell membrane</location>
        <topology evidence="1">Peripheral membrane protein</topology>
    </subcellularLocation>
</comment>
<comment type="similarity">
    <text evidence="1">Belongs to the NodC/HAS family.</text>
</comment>
<feature type="chain" id="PRO_0000197187" description="N-acetylglucosaminyltransferase">
    <location>
        <begin position="1"/>
        <end position="433"/>
    </location>
</feature>
<keyword id="KW-1003">Cell membrane</keyword>
<keyword id="KW-0328">Glycosyltransferase</keyword>
<keyword id="KW-0472">Membrane</keyword>
<keyword id="KW-0536">Nodulation</keyword>
<keyword id="KW-0808">Transferase</keyword>